<accession>Q9BP78</accession>
<comment type="subcellular location">
    <subcellularLocation>
        <location evidence="1">Secreted</location>
    </subcellularLocation>
</comment>
<comment type="tissue specificity">
    <text>Expressed by the venom duct.</text>
</comment>
<comment type="domain">
    <text evidence="1">The presence of a 'disulfide through disulfide knot' structurally defines this protein as a knottin.</text>
</comment>
<comment type="domain">
    <text>The cysteine framework is VI/VII (C-C-CC-C-C).</text>
</comment>
<comment type="similarity">
    <text evidence="3">Belongs to the conotoxin O1 superfamily.</text>
</comment>
<dbReference type="EMBL" id="AF215060">
    <property type="protein sequence ID" value="AAG60488.1"/>
    <property type="molecule type" value="mRNA"/>
</dbReference>
<dbReference type="SMR" id="Q9BP78"/>
<dbReference type="ConoServer" id="747">
    <property type="toxin name" value="Ar6.18 precursor"/>
</dbReference>
<dbReference type="GO" id="GO:0005576">
    <property type="term" value="C:extracellular region"/>
    <property type="evidence" value="ECO:0007669"/>
    <property type="project" value="UniProtKB-SubCell"/>
</dbReference>
<dbReference type="GO" id="GO:0008200">
    <property type="term" value="F:ion channel inhibitor activity"/>
    <property type="evidence" value="ECO:0007669"/>
    <property type="project" value="InterPro"/>
</dbReference>
<dbReference type="GO" id="GO:0090729">
    <property type="term" value="F:toxin activity"/>
    <property type="evidence" value="ECO:0007669"/>
    <property type="project" value="UniProtKB-KW"/>
</dbReference>
<dbReference type="InterPro" id="IPR004214">
    <property type="entry name" value="Conotoxin"/>
</dbReference>
<dbReference type="InterPro" id="IPR012321">
    <property type="entry name" value="Conotoxin_omega-typ_CS"/>
</dbReference>
<dbReference type="Pfam" id="PF02950">
    <property type="entry name" value="Conotoxin"/>
    <property type="match status" value="1"/>
</dbReference>
<dbReference type="PROSITE" id="PS60004">
    <property type="entry name" value="OMEGA_CONOTOXIN"/>
    <property type="match status" value="1"/>
</dbReference>
<organism>
    <name type="scientific">Conus arenatus</name>
    <name type="common">Sand-dusted cone</name>
    <dbReference type="NCBI Taxonomy" id="89451"/>
    <lineage>
        <taxon>Eukaryota</taxon>
        <taxon>Metazoa</taxon>
        <taxon>Spiralia</taxon>
        <taxon>Lophotrochozoa</taxon>
        <taxon>Mollusca</taxon>
        <taxon>Gastropoda</taxon>
        <taxon>Caenogastropoda</taxon>
        <taxon>Neogastropoda</taxon>
        <taxon>Conoidea</taxon>
        <taxon>Conidae</taxon>
        <taxon>Conus</taxon>
    </lineage>
</organism>
<proteinExistence type="evidence at transcript level"/>
<name>O1618_CONAE</name>
<feature type="signal peptide" evidence="2">
    <location>
        <begin position="1"/>
        <end position="22"/>
    </location>
</feature>
<feature type="propeptide" id="PRO_0000404756" evidence="1">
    <location>
        <begin position="23"/>
        <end position="46"/>
    </location>
</feature>
<feature type="peptide" id="PRO_0000404757" description="Conotoxin ArMKLT2-031">
    <location>
        <begin position="47"/>
        <end position="79"/>
    </location>
</feature>
<feature type="modified residue" description="Pyrrolidone carboxylic acid" evidence="1">
    <location>
        <position position="47"/>
    </location>
</feature>
<feature type="disulfide bond" evidence="1">
    <location>
        <begin position="48"/>
        <end position="62"/>
    </location>
</feature>
<feature type="disulfide bond" evidence="1">
    <location>
        <begin position="55"/>
        <end position="66"/>
    </location>
</feature>
<feature type="disulfide bond" evidence="1">
    <location>
        <begin position="61"/>
        <end position="73"/>
    </location>
</feature>
<keyword id="KW-1015">Disulfide bond</keyword>
<keyword id="KW-0960">Knottin</keyword>
<keyword id="KW-0528">Neurotoxin</keyword>
<keyword id="KW-0873">Pyrrolidone carboxylic acid</keyword>
<keyword id="KW-0964">Secreted</keyword>
<keyword id="KW-0732">Signal</keyword>
<keyword id="KW-0800">Toxin</keyword>
<evidence type="ECO:0000250" key="1"/>
<evidence type="ECO:0000255" key="2"/>
<evidence type="ECO:0000305" key="3"/>
<sequence length="79" mass="8689">MKLTCVLIIAVLFLTACQLTTGETYSRGEQKDHALRSTDKNSKLTRQCSPNGGSCSRHYHCCSLWCNKDSGVCVATSYP</sequence>
<reference key="1">
    <citation type="journal article" date="2001" name="Mol. Biol. Evol.">
        <title>Mechanisms for evolving hypervariability: the case of conopeptides.</title>
        <authorList>
            <person name="Conticello S.G."/>
            <person name="Gilad Y."/>
            <person name="Avidan N."/>
            <person name="Ben-Asher E."/>
            <person name="Levy Z."/>
            <person name="Fainzilber M."/>
        </authorList>
    </citation>
    <scope>NUCLEOTIDE SEQUENCE [MRNA]</scope>
    <source>
        <tissue>Venom duct</tissue>
    </source>
</reference>
<protein>
    <recommendedName>
        <fullName>Conotoxin ArMKLT2-031</fullName>
    </recommendedName>
</protein>